<protein>
    <recommendedName>
        <fullName evidence="1">Guanylate kinase</fullName>
        <ecNumber evidence="1">2.7.4.8</ecNumber>
    </recommendedName>
    <alternativeName>
        <fullName evidence="1">GMP kinase</fullName>
    </alternativeName>
</protein>
<dbReference type="EC" id="2.7.4.8" evidence="1"/>
<dbReference type="EMBL" id="CP000087">
    <property type="protein sequence ID" value="ABE04215.1"/>
    <property type="molecule type" value="Genomic_DNA"/>
</dbReference>
<dbReference type="RefSeq" id="WP_011476830.1">
    <property type="nucleotide sequence ID" value="NC_007940.1"/>
</dbReference>
<dbReference type="SMR" id="Q1RK99"/>
<dbReference type="KEGG" id="rbe:RBE_0134"/>
<dbReference type="eggNOG" id="COG0194">
    <property type="taxonomic scope" value="Bacteria"/>
</dbReference>
<dbReference type="HOGENOM" id="CLU_001715_1_0_5"/>
<dbReference type="OrthoDB" id="9808150at2"/>
<dbReference type="Proteomes" id="UP000001951">
    <property type="component" value="Chromosome"/>
</dbReference>
<dbReference type="GO" id="GO:0005829">
    <property type="term" value="C:cytosol"/>
    <property type="evidence" value="ECO:0007669"/>
    <property type="project" value="TreeGrafter"/>
</dbReference>
<dbReference type="GO" id="GO:0005524">
    <property type="term" value="F:ATP binding"/>
    <property type="evidence" value="ECO:0007669"/>
    <property type="project" value="UniProtKB-UniRule"/>
</dbReference>
<dbReference type="GO" id="GO:0004385">
    <property type="term" value="F:guanylate kinase activity"/>
    <property type="evidence" value="ECO:0007669"/>
    <property type="project" value="UniProtKB-UniRule"/>
</dbReference>
<dbReference type="CDD" id="cd00071">
    <property type="entry name" value="GMPK"/>
    <property type="match status" value="1"/>
</dbReference>
<dbReference type="FunFam" id="3.30.63.10:FF:000002">
    <property type="entry name" value="Guanylate kinase 1"/>
    <property type="match status" value="1"/>
</dbReference>
<dbReference type="Gene3D" id="3.30.63.10">
    <property type="entry name" value="Guanylate Kinase phosphate binding domain"/>
    <property type="match status" value="1"/>
</dbReference>
<dbReference type="Gene3D" id="3.40.50.300">
    <property type="entry name" value="P-loop containing nucleotide triphosphate hydrolases"/>
    <property type="match status" value="1"/>
</dbReference>
<dbReference type="HAMAP" id="MF_00328">
    <property type="entry name" value="Guanylate_kinase"/>
    <property type="match status" value="1"/>
</dbReference>
<dbReference type="InterPro" id="IPR008145">
    <property type="entry name" value="GK/Ca_channel_bsu"/>
</dbReference>
<dbReference type="InterPro" id="IPR008144">
    <property type="entry name" value="Guanylate_kin-like_dom"/>
</dbReference>
<dbReference type="InterPro" id="IPR017665">
    <property type="entry name" value="Guanylate_kinase"/>
</dbReference>
<dbReference type="InterPro" id="IPR020590">
    <property type="entry name" value="Guanylate_kinase_CS"/>
</dbReference>
<dbReference type="InterPro" id="IPR027417">
    <property type="entry name" value="P-loop_NTPase"/>
</dbReference>
<dbReference type="NCBIfam" id="TIGR03263">
    <property type="entry name" value="guanyl_kin"/>
    <property type="match status" value="1"/>
</dbReference>
<dbReference type="PANTHER" id="PTHR23117:SF13">
    <property type="entry name" value="GUANYLATE KINASE"/>
    <property type="match status" value="1"/>
</dbReference>
<dbReference type="PANTHER" id="PTHR23117">
    <property type="entry name" value="GUANYLATE KINASE-RELATED"/>
    <property type="match status" value="1"/>
</dbReference>
<dbReference type="Pfam" id="PF00625">
    <property type="entry name" value="Guanylate_kin"/>
    <property type="match status" value="1"/>
</dbReference>
<dbReference type="SMART" id="SM00072">
    <property type="entry name" value="GuKc"/>
    <property type="match status" value="1"/>
</dbReference>
<dbReference type="SUPFAM" id="SSF52540">
    <property type="entry name" value="P-loop containing nucleoside triphosphate hydrolases"/>
    <property type="match status" value="1"/>
</dbReference>
<dbReference type="PROSITE" id="PS00856">
    <property type="entry name" value="GUANYLATE_KINASE_1"/>
    <property type="match status" value="1"/>
</dbReference>
<dbReference type="PROSITE" id="PS50052">
    <property type="entry name" value="GUANYLATE_KINASE_2"/>
    <property type="match status" value="1"/>
</dbReference>
<evidence type="ECO:0000255" key="1">
    <source>
        <dbReference type="HAMAP-Rule" id="MF_00328"/>
    </source>
</evidence>
<comment type="function">
    <text evidence="1">Essential for recycling GMP and indirectly, cGMP.</text>
</comment>
<comment type="catalytic activity">
    <reaction evidence="1">
        <text>GMP + ATP = GDP + ADP</text>
        <dbReference type="Rhea" id="RHEA:20780"/>
        <dbReference type="ChEBI" id="CHEBI:30616"/>
        <dbReference type="ChEBI" id="CHEBI:58115"/>
        <dbReference type="ChEBI" id="CHEBI:58189"/>
        <dbReference type="ChEBI" id="CHEBI:456216"/>
        <dbReference type="EC" id="2.7.4.8"/>
    </reaction>
</comment>
<comment type="subcellular location">
    <subcellularLocation>
        <location evidence="1">Cytoplasm</location>
    </subcellularLocation>
</comment>
<comment type="similarity">
    <text evidence="1">Belongs to the guanylate kinase family.</text>
</comment>
<name>KGUA_RICBR</name>
<feature type="chain" id="PRO_0000266388" description="Guanylate kinase">
    <location>
        <begin position="1"/>
        <end position="191"/>
    </location>
</feature>
<feature type="domain" description="Guanylate kinase-like" evidence="1">
    <location>
        <begin position="6"/>
        <end position="184"/>
    </location>
</feature>
<feature type="binding site" evidence="1">
    <location>
        <begin position="13"/>
        <end position="20"/>
    </location>
    <ligand>
        <name>ATP</name>
        <dbReference type="ChEBI" id="CHEBI:30616"/>
    </ligand>
</feature>
<keyword id="KW-0067">ATP-binding</keyword>
<keyword id="KW-0963">Cytoplasm</keyword>
<keyword id="KW-0418">Kinase</keyword>
<keyword id="KW-0547">Nucleotide-binding</keyword>
<keyword id="KW-0808">Transferase</keyword>
<organism>
    <name type="scientific">Rickettsia bellii (strain RML369-C)</name>
    <dbReference type="NCBI Taxonomy" id="336407"/>
    <lineage>
        <taxon>Bacteria</taxon>
        <taxon>Pseudomonadati</taxon>
        <taxon>Pseudomonadota</taxon>
        <taxon>Alphaproteobacteria</taxon>
        <taxon>Rickettsiales</taxon>
        <taxon>Rickettsiaceae</taxon>
        <taxon>Rickettsieae</taxon>
        <taxon>Rickettsia</taxon>
        <taxon>belli group</taxon>
    </lineage>
</organism>
<gene>
    <name evidence="1" type="primary">gmk</name>
    <name type="ordered locus">RBE_0134</name>
</gene>
<sequence length="191" mass="21869">MTKNKGLIIILSSPSGAGKSSLAKALLEIDHNLRLSISATTRKPRPNEQDGVNYYFKTKVEFEKLVKQNQFLEHAKIYDNYYGTPKKHVENLLNQGLDVLFDIDWQGARSIKQNAVNAVSIFILPPNLEVLEQRLRNRAADNEEAIQLRMASAQAEISHSNEYDHIITNDDFNDTIQQIHTIILQERKKRN</sequence>
<accession>Q1RK99</accession>
<reference key="1">
    <citation type="journal article" date="2006" name="PLoS Genet.">
        <title>Genome sequence of Rickettsia bellii illuminates the role of amoebae in gene exchanges between intracellular pathogens.</title>
        <authorList>
            <person name="Ogata H."/>
            <person name="La Scola B."/>
            <person name="Audic S."/>
            <person name="Renesto P."/>
            <person name="Blanc G."/>
            <person name="Robert C."/>
            <person name="Fournier P.-E."/>
            <person name="Claverie J.-M."/>
            <person name="Raoult D."/>
        </authorList>
    </citation>
    <scope>NUCLEOTIDE SEQUENCE [LARGE SCALE GENOMIC DNA]</scope>
    <source>
        <strain>RML369-C</strain>
    </source>
</reference>
<proteinExistence type="inferred from homology"/>